<sequence>MKKGIHPNYVEITATCSCGNVIKTHSTVGHDLNLDVCGKCHPFFTGKQRVVDTGGRVERFNKRFSIPGSK</sequence>
<evidence type="ECO:0000255" key="1">
    <source>
        <dbReference type="HAMAP-Rule" id="MF_00501"/>
    </source>
</evidence>
<evidence type="ECO:0000305" key="2"/>
<comment type="function">
    <text evidence="1">Binds the 23S rRNA.</text>
</comment>
<comment type="cofactor">
    <cofactor evidence="1">
        <name>Zn(2+)</name>
        <dbReference type="ChEBI" id="CHEBI:29105"/>
    </cofactor>
    <text evidence="1">Binds 1 zinc ion per subunit.</text>
</comment>
<comment type="subunit">
    <text evidence="1">Part of the 50S ribosomal subunit.</text>
</comment>
<comment type="similarity">
    <text evidence="1">Belongs to the bacterial ribosomal protein bL31 family. Type A subfamily.</text>
</comment>
<proteinExistence type="inferred from homology"/>
<gene>
    <name evidence="1" type="primary">rpmE</name>
    <name type="ordered locus">SeHA_C4428</name>
</gene>
<name>RL31_SALHS</name>
<dbReference type="EMBL" id="CP001120">
    <property type="protein sequence ID" value="ACF69812.1"/>
    <property type="molecule type" value="Genomic_DNA"/>
</dbReference>
<dbReference type="RefSeq" id="WP_000715284.1">
    <property type="nucleotide sequence ID" value="NC_011083.1"/>
</dbReference>
<dbReference type="SMR" id="B4TCN3"/>
<dbReference type="GeneID" id="66758349"/>
<dbReference type="KEGG" id="seh:SeHA_C4428"/>
<dbReference type="HOGENOM" id="CLU_114306_4_3_6"/>
<dbReference type="Proteomes" id="UP000001866">
    <property type="component" value="Chromosome"/>
</dbReference>
<dbReference type="GO" id="GO:1990904">
    <property type="term" value="C:ribonucleoprotein complex"/>
    <property type="evidence" value="ECO:0007669"/>
    <property type="project" value="UniProtKB-KW"/>
</dbReference>
<dbReference type="GO" id="GO:0005840">
    <property type="term" value="C:ribosome"/>
    <property type="evidence" value="ECO:0007669"/>
    <property type="project" value="UniProtKB-KW"/>
</dbReference>
<dbReference type="GO" id="GO:0046872">
    <property type="term" value="F:metal ion binding"/>
    <property type="evidence" value="ECO:0007669"/>
    <property type="project" value="UniProtKB-KW"/>
</dbReference>
<dbReference type="GO" id="GO:0019843">
    <property type="term" value="F:rRNA binding"/>
    <property type="evidence" value="ECO:0007669"/>
    <property type="project" value="UniProtKB-KW"/>
</dbReference>
<dbReference type="GO" id="GO:0003735">
    <property type="term" value="F:structural constituent of ribosome"/>
    <property type="evidence" value="ECO:0007669"/>
    <property type="project" value="InterPro"/>
</dbReference>
<dbReference type="GO" id="GO:0006412">
    <property type="term" value="P:translation"/>
    <property type="evidence" value="ECO:0007669"/>
    <property type="project" value="UniProtKB-UniRule"/>
</dbReference>
<dbReference type="FunFam" id="4.10.830.30:FF:000001">
    <property type="entry name" value="50S ribosomal protein L31"/>
    <property type="match status" value="1"/>
</dbReference>
<dbReference type="Gene3D" id="4.10.830.30">
    <property type="entry name" value="Ribosomal protein L31"/>
    <property type="match status" value="1"/>
</dbReference>
<dbReference type="HAMAP" id="MF_00501">
    <property type="entry name" value="Ribosomal_bL31_1"/>
    <property type="match status" value="1"/>
</dbReference>
<dbReference type="InterPro" id="IPR034704">
    <property type="entry name" value="Ribosomal_bL28/bL31-like_sf"/>
</dbReference>
<dbReference type="InterPro" id="IPR002150">
    <property type="entry name" value="Ribosomal_bL31"/>
</dbReference>
<dbReference type="InterPro" id="IPR027491">
    <property type="entry name" value="Ribosomal_bL31_A"/>
</dbReference>
<dbReference type="InterPro" id="IPR042105">
    <property type="entry name" value="Ribosomal_bL31_sf"/>
</dbReference>
<dbReference type="NCBIfam" id="TIGR00105">
    <property type="entry name" value="L31"/>
    <property type="match status" value="1"/>
</dbReference>
<dbReference type="NCBIfam" id="NF000612">
    <property type="entry name" value="PRK00019.1"/>
    <property type="match status" value="1"/>
</dbReference>
<dbReference type="NCBIfam" id="NF001809">
    <property type="entry name" value="PRK00528.1"/>
    <property type="match status" value="1"/>
</dbReference>
<dbReference type="PANTHER" id="PTHR33280">
    <property type="entry name" value="50S RIBOSOMAL PROTEIN L31, CHLOROPLASTIC"/>
    <property type="match status" value="1"/>
</dbReference>
<dbReference type="PANTHER" id="PTHR33280:SF6">
    <property type="entry name" value="LARGE RIBOSOMAL SUBUNIT PROTEIN BL31A"/>
    <property type="match status" value="1"/>
</dbReference>
<dbReference type="Pfam" id="PF01197">
    <property type="entry name" value="Ribosomal_L31"/>
    <property type="match status" value="1"/>
</dbReference>
<dbReference type="PRINTS" id="PR01249">
    <property type="entry name" value="RIBOSOMALL31"/>
</dbReference>
<dbReference type="SUPFAM" id="SSF143800">
    <property type="entry name" value="L28p-like"/>
    <property type="match status" value="1"/>
</dbReference>
<dbReference type="PROSITE" id="PS01143">
    <property type="entry name" value="RIBOSOMAL_L31"/>
    <property type="match status" value="1"/>
</dbReference>
<reference key="1">
    <citation type="journal article" date="2011" name="J. Bacteriol.">
        <title>Comparative genomics of 28 Salmonella enterica isolates: evidence for CRISPR-mediated adaptive sublineage evolution.</title>
        <authorList>
            <person name="Fricke W.F."/>
            <person name="Mammel M.K."/>
            <person name="McDermott P.F."/>
            <person name="Tartera C."/>
            <person name="White D.G."/>
            <person name="Leclerc J.E."/>
            <person name="Ravel J."/>
            <person name="Cebula T.A."/>
        </authorList>
    </citation>
    <scope>NUCLEOTIDE SEQUENCE [LARGE SCALE GENOMIC DNA]</scope>
    <source>
        <strain>SL476</strain>
    </source>
</reference>
<accession>B4TCN3</accession>
<protein>
    <recommendedName>
        <fullName evidence="1">Large ribosomal subunit protein bL31</fullName>
    </recommendedName>
    <alternativeName>
        <fullName evidence="2">50S ribosomal protein L31</fullName>
    </alternativeName>
</protein>
<keyword id="KW-0479">Metal-binding</keyword>
<keyword id="KW-0687">Ribonucleoprotein</keyword>
<keyword id="KW-0689">Ribosomal protein</keyword>
<keyword id="KW-0694">RNA-binding</keyword>
<keyword id="KW-0699">rRNA-binding</keyword>
<keyword id="KW-0862">Zinc</keyword>
<feature type="chain" id="PRO_1000126719" description="Large ribosomal subunit protein bL31">
    <location>
        <begin position="1"/>
        <end position="70"/>
    </location>
</feature>
<feature type="binding site" evidence="1">
    <location>
        <position position="16"/>
    </location>
    <ligand>
        <name>Zn(2+)</name>
        <dbReference type="ChEBI" id="CHEBI:29105"/>
    </ligand>
</feature>
<feature type="binding site" evidence="1">
    <location>
        <position position="18"/>
    </location>
    <ligand>
        <name>Zn(2+)</name>
        <dbReference type="ChEBI" id="CHEBI:29105"/>
    </ligand>
</feature>
<feature type="binding site" evidence="1">
    <location>
        <position position="37"/>
    </location>
    <ligand>
        <name>Zn(2+)</name>
        <dbReference type="ChEBI" id="CHEBI:29105"/>
    </ligand>
</feature>
<feature type="binding site" evidence="1">
    <location>
        <position position="40"/>
    </location>
    <ligand>
        <name>Zn(2+)</name>
        <dbReference type="ChEBI" id="CHEBI:29105"/>
    </ligand>
</feature>
<organism>
    <name type="scientific">Salmonella heidelberg (strain SL476)</name>
    <dbReference type="NCBI Taxonomy" id="454169"/>
    <lineage>
        <taxon>Bacteria</taxon>
        <taxon>Pseudomonadati</taxon>
        <taxon>Pseudomonadota</taxon>
        <taxon>Gammaproteobacteria</taxon>
        <taxon>Enterobacterales</taxon>
        <taxon>Enterobacteriaceae</taxon>
        <taxon>Salmonella</taxon>
    </lineage>
</organism>